<comment type="function">
    <text evidence="1">NDH shuttles electrons from NAD(P)H:plastoquinone, via FMN and iron-sulfur (Fe-S) centers, to quinones in the photosynthetic chain and possibly in a chloroplast respiratory chain. The immediate electron acceptor for the enzyme in this species is believed to be plastoquinone. Couples the redox reaction to proton translocation, and thus conserves the redox energy in a proton gradient (By similarity).</text>
</comment>
<comment type="catalytic activity">
    <reaction>
        <text>a plastoquinone + NADH + (n+1) H(+)(in) = a plastoquinol + NAD(+) + n H(+)(out)</text>
        <dbReference type="Rhea" id="RHEA:42608"/>
        <dbReference type="Rhea" id="RHEA-COMP:9561"/>
        <dbReference type="Rhea" id="RHEA-COMP:9562"/>
        <dbReference type="ChEBI" id="CHEBI:15378"/>
        <dbReference type="ChEBI" id="CHEBI:17757"/>
        <dbReference type="ChEBI" id="CHEBI:57540"/>
        <dbReference type="ChEBI" id="CHEBI:57945"/>
        <dbReference type="ChEBI" id="CHEBI:62192"/>
    </reaction>
</comment>
<comment type="catalytic activity">
    <reaction>
        <text>a plastoquinone + NADPH + (n+1) H(+)(in) = a plastoquinol + NADP(+) + n H(+)(out)</text>
        <dbReference type="Rhea" id="RHEA:42612"/>
        <dbReference type="Rhea" id="RHEA-COMP:9561"/>
        <dbReference type="Rhea" id="RHEA-COMP:9562"/>
        <dbReference type="ChEBI" id="CHEBI:15378"/>
        <dbReference type="ChEBI" id="CHEBI:17757"/>
        <dbReference type="ChEBI" id="CHEBI:57783"/>
        <dbReference type="ChEBI" id="CHEBI:58349"/>
        <dbReference type="ChEBI" id="CHEBI:62192"/>
    </reaction>
</comment>
<comment type="subunit">
    <text evidence="1">NDH is composed of at least 16 different subunits, 5 of which are encoded in the nucleus.</text>
</comment>
<comment type="subcellular location">
    <subcellularLocation>
        <location evidence="1">Plastid</location>
        <location evidence="1">Chloroplast thylakoid membrane</location>
        <topology evidence="1">Multi-pass membrane protein</topology>
    </subcellularLocation>
</comment>
<comment type="similarity">
    <text evidence="3">Belongs to the complex I subunit 5 family.</text>
</comment>
<protein>
    <recommendedName>
        <fullName>NAD(P)H-quinone oxidoreductase subunit 5, chloroplastic</fullName>
        <ecNumber>7.1.1.-</ecNumber>
    </recommendedName>
    <alternativeName>
        <fullName>NAD(P)H dehydrogenase subunit 5</fullName>
    </alternativeName>
    <alternativeName>
        <fullName>NADH-plastoquinone oxidoreductase subunit 5</fullName>
    </alternativeName>
</protein>
<evidence type="ECO:0000250" key="1"/>
<evidence type="ECO:0000255" key="2"/>
<evidence type="ECO:0000305" key="3"/>
<organism>
    <name type="scientific">Nicotiana sylvestris</name>
    <name type="common">Wood tobacco</name>
    <name type="synonym">South American tobacco</name>
    <dbReference type="NCBI Taxonomy" id="4096"/>
    <lineage>
        <taxon>Eukaryota</taxon>
        <taxon>Viridiplantae</taxon>
        <taxon>Streptophyta</taxon>
        <taxon>Embryophyta</taxon>
        <taxon>Tracheophyta</taxon>
        <taxon>Spermatophyta</taxon>
        <taxon>Magnoliopsida</taxon>
        <taxon>eudicotyledons</taxon>
        <taxon>Gunneridae</taxon>
        <taxon>Pentapetalae</taxon>
        <taxon>asterids</taxon>
        <taxon>lamiids</taxon>
        <taxon>Solanales</taxon>
        <taxon>Solanaceae</taxon>
        <taxon>Nicotianoideae</taxon>
        <taxon>Nicotianeae</taxon>
        <taxon>Nicotiana</taxon>
    </lineage>
</organism>
<proteinExistence type="inferred from homology"/>
<reference key="1">
    <citation type="journal article" date="2006" name="Mol. Genet. Genomics">
        <title>The chloroplast genome of Nicotiana sylvestris and Nicotiana tomentosiformis: complete sequencing confirms that the Nicotiana sylvestris progenitor is the maternal genome donor of Nicotiana tabacum.</title>
        <authorList>
            <person name="Yukawa M."/>
            <person name="Tsudzuki T."/>
            <person name="Sugiura M."/>
        </authorList>
    </citation>
    <scope>NUCLEOTIDE SEQUENCE [LARGE SCALE GENOMIC DNA]</scope>
</reference>
<keyword id="KW-0150">Chloroplast</keyword>
<keyword id="KW-0472">Membrane</keyword>
<keyword id="KW-0520">NAD</keyword>
<keyword id="KW-0521">NADP</keyword>
<keyword id="KW-0934">Plastid</keyword>
<keyword id="KW-0618">Plastoquinone</keyword>
<keyword id="KW-0874">Quinone</keyword>
<keyword id="KW-1185">Reference proteome</keyword>
<keyword id="KW-0793">Thylakoid</keyword>
<keyword id="KW-1278">Translocase</keyword>
<keyword id="KW-0812">Transmembrane</keyword>
<keyword id="KW-1133">Transmembrane helix</keyword>
<keyword id="KW-0813">Transport</keyword>
<sequence>MEQTYEYAWIIPFIPLPVPMLIGAGLFLFPTATKSFRRMWAFQSVLLLSIVMVFSIYLSIQQINSSSFYQYVWSWIINNDFSLDFGYLIDPLTSIMSILITTVGIMVLIYSDNYMAHDQGYLRFFAYMSFFSTSMLGLVTSSNLIQIYIFWELVGLCSYLLIGFWFTRPVAANACQKAFVTNRVGDFGLLLGILGFYWITGSFEFRDLFEIFNNLIYNNEVDFLFVTLCAVLLFAGAVAKSAQFPLHVWLPDAMEGPTPISALIHAATMVAAGIFLVARLLPLFRVIPYIMYLISVIGIITVLLGATLALAQKDIKRGLAYSTMSQLGYMMLALGMGSYRSALFHLITHAYSKALLFLGSGSIIHSMETIVGYSPAKSQNMGLMGGLRKHVPISKITFLLGTLSLCGIPPLACFWSKDEILNDSWLYSPIFAIIAWATAGLTAFYMFRIYLLTFEGHLNAHFQNYGGKQKTPFYSISLWGKNGVKKNSCLLTMNNNESTYFFAKTKYPIDKNGRKMTRPFMTIAHFEHKAVYSYPYESDNTMLFPIFVLGLFTLFVGSIGIPFNQEGGNLDILSKWLAPSINLLHQKSNNSMDWNEFLKDAVLSVSIAYFGIFIASFLYKPIYSSLKNFELINSFVKKGPKRILWDKIINGIYDWSYNRAYIDAFYTRFLVGGIRGLAEFTHFFDRRVIDGMTNGVGVISFIVGEGIKYIGGGRISSYLFLYLAYVSIFLLVYYLLFSTL</sequence>
<name>NU5C_NICSY</name>
<dbReference type="EC" id="7.1.1.-"/>
<dbReference type="EMBL" id="AB237912">
    <property type="protein sequence ID" value="BAE46711.1"/>
    <property type="molecule type" value="Genomic_DNA"/>
</dbReference>
<dbReference type="RefSeq" id="YP_358734.1">
    <property type="nucleotide sequence ID" value="NC_007500.1"/>
</dbReference>
<dbReference type="SMR" id="Q3C1N9"/>
<dbReference type="GeneID" id="3735064"/>
<dbReference type="KEGG" id="nsy:3735064"/>
<dbReference type="OrthoDB" id="21211at4085"/>
<dbReference type="Proteomes" id="UP000189701">
    <property type="component" value="Chloroplast Pltd"/>
</dbReference>
<dbReference type="GO" id="GO:0009535">
    <property type="term" value="C:chloroplast thylakoid membrane"/>
    <property type="evidence" value="ECO:0007669"/>
    <property type="project" value="UniProtKB-SubCell"/>
</dbReference>
<dbReference type="GO" id="GO:0008137">
    <property type="term" value="F:NADH dehydrogenase (ubiquinone) activity"/>
    <property type="evidence" value="ECO:0007669"/>
    <property type="project" value="InterPro"/>
</dbReference>
<dbReference type="GO" id="GO:0048038">
    <property type="term" value="F:quinone binding"/>
    <property type="evidence" value="ECO:0007669"/>
    <property type="project" value="UniProtKB-KW"/>
</dbReference>
<dbReference type="GO" id="GO:0042773">
    <property type="term" value="P:ATP synthesis coupled electron transport"/>
    <property type="evidence" value="ECO:0007669"/>
    <property type="project" value="InterPro"/>
</dbReference>
<dbReference type="GO" id="GO:0015990">
    <property type="term" value="P:electron transport coupled proton transport"/>
    <property type="evidence" value="ECO:0007669"/>
    <property type="project" value="TreeGrafter"/>
</dbReference>
<dbReference type="Gene3D" id="1.20.5.2700">
    <property type="match status" value="1"/>
</dbReference>
<dbReference type="InterPro" id="IPR002128">
    <property type="entry name" value="NADH_UbQ_OxRdtase_chlpt_su5_C"/>
</dbReference>
<dbReference type="InterPro" id="IPR018393">
    <property type="entry name" value="NADHpl_OxRdtase_5_subgr"/>
</dbReference>
<dbReference type="InterPro" id="IPR001750">
    <property type="entry name" value="ND/Mrp_TM"/>
</dbReference>
<dbReference type="InterPro" id="IPR003945">
    <property type="entry name" value="NU5C-like"/>
</dbReference>
<dbReference type="InterPro" id="IPR001516">
    <property type="entry name" value="Proton_antipo_N"/>
</dbReference>
<dbReference type="NCBIfam" id="TIGR01974">
    <property type="entry name" value="NDH_I_L"/>
    <property type="match status" value="1"/>
</dbReference>
<dbReference type="NCBIfam" id="NF005141">
    <property type="entry name" value="PRK06590.1"/>
    <property type="match status" value="1"/>
</dbReference>
<dbReference type="PANTHER" id="PTHR42829">
    <property type="entry name" value="NADH-UBIQUINONE OXIDOREDUCTASE CHAIN 5"/>
    <property type="match status" value="1"/>
</dbReference>
<dbReference type="PANTHER" id="PTHR42829:SF2">
    <property type="entry name" value="NADH-UBIQUINONE OXIDOREDUCTASE CHAIN 5"/>
    <property type="match status" value="1"/>
</dbReference>
<dbReference type="Pfam" id="PF01010">
    <property type="entry name" value="Proton_antipo_C"/>
    <property type="match status" value="1"/>
</dbReference>
<dbReference type="Pfam" id="PF00361">
    <property type="entry name" value="Proton_antipo_M"/>
    <property type="match status" value="1"/>
</dbReference>
<dbReference type="Pfam" id="PF00662">
    <property type="entry name" value="Proton_antipo_N"/>
    <property type="match status" value="1"/>
</dbReference>
<dbReference type="PRINTS" id="PR01434">
    <property type="entry name" value="NADHDHGNASE5"/>
</dbReference>
<dbReference type="PRINTS" id="PR01435">
    <property type="entry name" value="NPOXDRDTASE5"/>
</dbReference>
<accession>Q3C1N9</accession>
<gene>
    <name type="primary">ndhF</name>
</gene>
<feature type="chain" id="PRO_0000360953" description="NAD(P)H-quinone oxidoreductase subunit 5, chloroplastic">
    <location>
        <begin position="1"/>
        <end position="740"/>
    </location>
</feature>
<feature type="transmembrane region" description="Helical" evidence="2">
    <location>
        <begin position="9"/>
        <end position="29"/>
    </location>
</feature>
<feature type="transmembrane region" description="Helical" evidence="2">
    <location>
        <begin position="40"/>
        <end position="60"/>
    </location>
</feature>
<feature type="transmembrane region" description="Helical" evidence="2">
    <location>
        <begin position="89"/>
        <end position="109"/>
    </location>
</feature>
<feature type="transmembrane region" description="Helical" evidence="2">
    <location>
        <begin position="125"/>
        <end position="145"/>
    </location>
</feature>
<feature type="transmembrane region" description="Helical" evidence="2">
    <location>
        <begin position="147"/>
        <end position="167"/>
    </location>
</feature>
<feature type="transmembrane region" description="Helical" evidence="2">
    <location>
        <begin position="185"/>
        <end position="205"/>
    </location>
</feature>
<feature type="transmembrane region" description="Helical" evidence="2">
    <location>
        <begin position="219"/>
        <end position="239"/>
    </location>
</feature>
<feature type="transmembrane region" description="Helical" evidence="2">
    <location>
        <begin position="258"/>
        <end position="278"/>
    </location>
</feature>
<feature type="transmembrane region" description="Helical" evidence="2">
    <location>
        <begin position="286"/>
        <end position="306"/>
    </location>
</feature>
<feature type="transmembrane region" description="Helical" evidence="2">
    <location>
        <begin position="327"/>
        <end position="347"/>
    </location>
</feature>
<feature type="transmembrane region" description="Helical" evidence="2">
    <location>
        <begin position="354"/>
        <end position="374"/>
    </location>
</feature>
<feature type="transmembrane region" description="Helical" evidence="2">
    <location>
        <begin position="396"/>
        <end position="416"/>
    </location>
</feature>
<feature type="transmembrane region" description="Helical" evidence="2">
    <location>
        <begin position="425"/>
        <end position="445"/>
    </location>
</feature>
<feature type="transmembrane region" description="Helical" evidence="2">
    <location>
        <begin position="543"/>
        <end position="563"/>
    </location>
</feature>
<feature type="transmembrane region" description="Helical" evidence="2">
    <location>
        <begin position="602"/>
        <end position="622"/>
    </location>
</feature>
<feature type="transmembrane region" description="Helical" evidence="2">
    <location>
        <begin position="717"/>
        <end position="737"/>
    </location>
</feature>
<geneLocation type="chloroplast"/>